<protein>
    <recommendedName>
        <fullName>Probable serine/threonine-protein kinase nek3</fullName>
        <ecNumber>2.7.11.1</ecNumber>
    </recommendedName>
    <alternativeName>
        <fullName>Never in mitosis protein A-related protein kinase 3</fullName>
    </alternativeName>
    <alternativeName>
        <fullName>NimA-related protein kinase 3</fullName>
    </alternativeName>
</protein>
<sequence length="1123" mass="120809">MDKYEEIKTIGKGSFGRAILVKRKSDGLLLVLKEINVMEMQPKERSDAMNEVNLLSMLDHENIIGYYDSFILNGCLYIIMEYANAGDINLEIKKRTLQNKTFSEFEILSWFSQICKALQYISSRNILHRDLKTQNIFLSIVNGDYFIKLGDFGIAKILNSETSLASTVLGTPYYLSPELIQNEKGYDHKSDIWSLGCVLYELTTLKHAFNAANLPALVLKILKGTYPPIPSHYSNDLRNLISSMLQIDPKNRPSVNDILELPFINQYLGIPLKPFDSNLNENNNDSLNISNNSSGSNNSASNNISSSTEVKDQKFQNIPLAMARNINNNNNNNNNNNNNNNNNNNNNNNNNNNNNNNNNNNNNNNNKSNVDDVNSSSTTTTSSSIVKSKVNTTVSPPLSPKKPITTTTTKTTSLKTTPSIKPTLVKTPTIKSSLVKTPLSKTPISGTKNPTTSKITPSIKTPLPKAPISSKTPTRLVSKPTTPKITTPKSTSTMITPKRTTTTTTTPTPTTATTTPKKSSLSSSSSSSVKPPPPTTTTTTPSKDRSSVNTINKPMASNLSSQISSSSSSSSSSNSQFRPTTPSKERMSPTSTSTKSPTNPSPTLSSSSSLPKSSLKSDSLCTSPPRFSNTTGSSGGIGVSGNGNSNVNSTVLNRSVSSLSIQHKPTNSGSSSISSSSSGNNSNSNTTTNNNTTSTTPIRPGLKSTKSMLELSTPTSISTSNKSTTTTPTSSRSNTPSTGRLSLTTSIPRPPSSNGSNTGSSSSTTTTPTKISTTSSSSSLNKLTTPIKSSTTTSTTASTNSQTIKKSITPIKVTSQQVDSTISNIKNNIVIGNSVSTKTNISVISHLSPSIKPLPTQSIITQLPTSASTASTASTTNTTLTSGTNTMTTKKRTDFKLDDLGHRSKLNSVKLSSKSSSPIKTSSSSSSSSSSSSSITDKKSINRVKLNNLKEKNKEIINNIKISSTIPKPSNINSSSSSAFSDLNSSGSSSLNNSLTSSSSSIITNQNNQNNQNNQNNQNNQNNLKIINELILQNNLNNSISKENLDDKRLHSRANALRHFCSSIFGEDKFKETYNLLKSQSPSTSNNEIVDIASIENQLSQLIGDKIYYLKYLQQLIYCESQI</sequence>
<gene>
    <name type="primary">nek3</name>
    <name type="ORF">DDB_G0275241</name>
</gene>
<proteinExistence type="inferred from homology"/>
<feature type="chain" id="PRO_0000362028" description="Probable serine/threonine-protein kinase nek3">
    <location>
        <begin position="1"/>
        <end position="1123"/>
    </location>
</feature>
<feature type="domain" description="Protein kinase" evidence="1">
    <location>
        <begin position="4"/>
        <end position="264"/>
    </location>
</feature>
<feature type="region of interest" description="Disordered" evidence="3">
    <location>
        <begin position="283"/>
        <end position="310"/>
    </location>
</feature>
<feature type="region of interest" description="Disordered" evidence="3">
    <location>
        <begin position="325"/>
        <end position="415"/>
    </location>
</feature>
<feature type="region of interest" description="Disordered" evidence="3">
    <location>
        <begin position="440"/>
        <end position="802"/>
    </location>
</feature>
<feature type="region of interest" description="Disordered" evidence="3">
    <location>
        <begin position="866"/>
        <end position="887"/>
    </location>
</feature>
<feature type="region of interest" description="Disordered" evidence="3">
    <location>
        <begin position="908"/>
        <end position="937"/>
    </location>
</feature>
<feature type="region of interest" description="Disordered" evidence="3">
    <location>
        <begin position="990"/>
        <end position="1020"/>
    </location>
</feature>
<feature type="compositionally biased region" description="Low complexity" evidence="3">
    <location>
        <begin position="283"/>
        <end position="307"/>
    </location>
</feature>
<feature type="compositionally biased region" description="Low complexity" evidence="3">
    <location>
        <begin position="327"/>
        <end position="415"/>
    </location>
</feature>
<feature type="compositionally biased region" description="Polar residues" evidence="3">
    <location>
        <begin position="440"/>
        <end position="459"/>
    </location>
</feature>
<feature type="compositionally biased region" description="Low complexity" evidence="3">
    <location>
        <begin position="478"/>
        <end position="529"/>
    </location>
</feature>
<feature type="compositionally biased region" description="Low complexity" evidence="3">
    <location>
        <begin position="557"/>
        <end position="576"/>
    </location>
</feature>
<feature type="compositionally biased region" description="Low complexity" evidence="3">
    <location>
        <begin position="588"/>
        <end position="617"/>
    </location>
</feature>
<feature type="compositionally biased region" description="Low complexity" evidence="3">
    <location>
        <begin position="642"/>
        <end position="653"/>
    </location>
</feature>
<feature type="compositionally biased region" description="Polar residues" evidence="3">
    <location>
        <begin position="654"/>
        <end position="665"/>
    </location>
</feature>
<feature type="compositionally biased region" description="Low complexity" evidence="3">
    <location>
        <begin position="666"/>
        <end position="696"/>
    </location>
</feature>
<feature type="compositionally biased region" description="Low complexity" evidence="3">
    <location>
        <begin position="712"/>
        <end position="738"/>
    </location>
</feature>
<feature type="compositionally biased region" description="Low complexity" evidence="3">
    <location>
        <begin position="752"/>
        <end position="802"/>
    </location>
</feature>
<feature type="compositionally biased region" description="Low complexity" evidence="3">
    <location>
        <begin position="908"/>
        <end position="935"/>
    </location>
</feature>
<feature type="active site" description="Proton acceptor" evidence="1 2">
    <location>
        <position position="130"/>
    </location>
</feature>
<feature type="binding site" evidence="1">
    <location>
        <begin position="10"/>
        <end position="18"/>
    </location>
    <ligand>
        <name>ATP</name>
        <dbReference type="ChEBI" id="CHEBI:30616"/>
    </ligand>
</feature>
<feature type="binding site" evidence="1">
    <location>
        <position position="33"/>
    </location>
    <ligand>
        <name>ATP</name>
        <dbReference type="ChEBI" id="CHEBI:30616"/>
    </ligand>
</feature>
<keyword id="KW-0067">ATP-binding</keyword>
<keyword id="KW-0418">Kinase</keyword>
<keyword id="KW-0547">Nucleotide-binding</keyword>
<keyword id="KW-1185">Reference proteome</keyword>
<keyword id="KW-0723">Serine/threonine-protein kinase</keyword>
<keyword id="KW-0808">Transferase</keyword>
<organism>
    <name type="scientific">Dictyostelium discoideum</name>
    <name type="common">Social amoeba</name>
    <dbReference type="NCBI Taxonomy" id="44689"/>
    <lineage>
        <taxon>Eukaryota</taxon>
        <taxon>Amoebozoa</taxon>
        <taxon>Evosea</taxon>
        <taxon>Eumycetozoa</taxon>
        <taxon>Dictyostelia</taxon>
        <taxon>Dictyosteliales</taxon>
        <taxon>Dictyosteliaceae</taxon>
        <taxon>Dictyostelium</taxon>
    </lineage>
</organism>
<name>NEK3_DICDI</name>
<dbReference type="EC" id="2.7.11.1"/>
<dbReference type="EMBL" id="AAFI02000013">
    <property type="protein sequence ID" value="EAL69901.1"/>
    <property type="molecule type" value="Genomic_DNA"/>
</dbReference>
<dbReference type="RefSeq" id="XP_643733.1">
    <property type="nucleotide sequence ID" value="XM_638641.1"/>
</dbReference>
<dbReference type="SMR" id="Q86I06"/>
<dbReference type="FunCoup" id="Q86I06">
    <property type="interactions" value="125"/>
</dbReference>
<dbReference type="STRING" id="44689.Q86I06"/>
<dbReference type="GlyGen" id="Q86I06">
    <property type="glycosylation" value="1 site"/>
</dbReference>
<dbReference type="PaxDb" id="44689-DDB0220003"/>
<dbReference type="EnsemblProtists" id="EAL69901">
    <property type="protein sequence ID" value="EAL69901"/>
    <property type="gene ID" value="DDB_G0275241"/>
</dbReference>
<dbReference type="GeneID" id="8619775"/>
<dbReference type="KEGG" id="ddi:DDB_G0275241"/>
<dbReference type="dictyBase" id="DDB_G0275241">
    <property type="gene designation" value="nek3"/>
</dbReference>
<dbReference type="VEuPathDB" id="AmoebaDB:DDB_G0275241"/>
<dbReference type="eggNOG" id="KOG0589">
    <property type="taxonomic scope" value="Eukaryota"/>
</dbReference>
<dbReference type="HOGENOM" id="CLU_280118_0_0_1"/>
<dbReference type="InParanoid" id="Q86I06"/>
<dbReference type="OMA" id="EINVMEM"/>
<dbReference type="PRO" id="PR:Q86I06"/>
<dbReference type="Proteomes" id="UP000002195">
    <property type="component" value="Chromosome 2"/>
</dbReference>
<dbReference type="GO" id="GO:0005737">
    <property type="term" value="C:cytoplasm"/>
    <property type="evidence" value="ECO:0000318"/>
    <property type="project" value="GO_Central"/>
</dbReference>
<dbReference type="GO" id="GO:0005524">
    <property type="term" value="F:ATP binding"/>
    <property type="evidence" value="ECO:0007669"/>
    <property type="project" value="UniProtKB-KW"/>
</dbReference>
<dbReference type="GO" id="GO:0106310">
    <property type="term" value="F:protein serine kinase activity"/>
    <property type="evidence" value="ECO:0007669"/>
    <property type="project" value="RHEA"/>
</dbReference>
<dbReference type="GO" id="GO:0004674">
    <property type="term" value="F:protein serine/threonine kinase activity"/>
    <property type="evidence" value="ECO:0000318"/>
    <property type="project" value="GO_Central"/>
</dbReference>
<dbReference type="GO" id="GO:0006974">
    <property type="term" value="P:DNA damage response"/>
    <property type="evidence" value="ECO:0000318"/>
    <property type="project" value="GO_Central"/>
</dbReference>
<dbReference type="CDD" id="cd08215">
    <property type="entry name" value="STKc_Nek"/>
    <property type="match status" value="1"/>
</dbReference>
<dbReference type="FunFam" id="3.30.200.20:FF:000097">
    <property type="entry name" value="Probable serine/threonine-protein kinase nek1"/>
    <property type="match status" value="1"/>
</dbReference>
<dbReference type="Gene3D" id="3.30.200.20">
    <property type="entry name" value="Phosphorylase Kinase, domain 1"/>
    <property type="match status" value="1"/>
</dbReference>
<dbReference type="Gene3D" id="1.10.510.10">
    <property type="entry name" value="Transferase(Phosphotransferase) domain 1"/>
    <property type="match status" value="1"/>
</dbReference>
<dbReference type="InterPro" id="IPR011009">
    <property type="entry name" value="Kinase-like_dom_sf"/>
</dbReference>
<dbReference type="InterPro" id="IPR051131">
    <property type="entry name" value="NEK_Ser/Thr_kinase_NIMA"/>
</dbReference>
<dbReference type="InterPro" id="IPR000719">
    <property type="entry name" value="Prot_kinase_dom"/>
</dbReference>
<dbReference type="InterPro" id="IPR017441">
    <property type="entry name" value="Protein_kinase_ATP_BS"/>
</dbReference>
<dbReference type="InterPro" id="IPR008271">
    <property type="entry name" value="Ser/Thr_kinase_AS"/>
</dbReference>
<dbReference type="PANTHER" id="PTHR44899">
    <property type="entry name" value="CAMK FAMILY PROTEIN KINASE"/>
    <property type="match status" value="1"/>
</dbReference>
<dbReference type="PANTHER" id="PTHR44899:SF3">
    <property type="entry name" value="SERINE_THREONINE-PROTEIN KINASE NEK1"/>
    <property type="match status" value="1"/>
</dbReference>
<dbReference type="Pfam" id="PF00069">
    <property type="entry name" value="Pkinase"/>
    <property type="match status" value="1"/>
</dbReference>
<dbReference type="SMART" id="SM00220">
    <property type="entry name" value="S_TKc"/>
    <property type="match status" value="1"/>
</dbReference>
<dbReference type="SUPFAM" id="SSF56112">
    <property type="entry name" value="Protein kinase-like (PK-like)"/>
    <property type="match status" value="1"/>
</dbReference>
<dbReference type="PROSITE" id="PS00107">
    <property type="entry name" value="PROTEIN_KINASE_ATP"/>
    <property type="match status" value="1"/>
</dbReference>
<dbReference type="PROSITE" id="PS50011">
    <property type="entry name" value="PROTEIN_KINASE_DOM"/>
    <property type="match status" value="1"/>
</dbReference>
<dbReference type="PROSITE" id="PS00108">
    <property type="entry name" value="PROTEIN_KINASE_ST"/>
    <property type="match status" value="1"/>
</dbReference>
<accession>Q86I06</accession>
<accession>Q554H8</accession>
<reference key="1">
    <citation type="journal article" date="2002" name="Nature">
        <title>Sequence and analysis of chromosome 2 of Dictyostelium discoideum.</title>
        <authorList>
            <person name="Gloeckner G."/>
            <person name="Eichinger L."/>
            <person name="Szafranski K."/>
            <person name="Pachebat J.A."/>
            <person name="Bankier A.T."/>
            <person name="Dear P.H."/>
            <person name="Lehmann R."/>
            <person name="Baumgart C."/>
            <person name="Parra G."/>
            <person name="Abril J.F."/>
            <person name="Guigo R."/>
            <person name="Kumpf K."/>
            <person name="Tunggal B."/>
            <person name="Cox E.C."/>
            <person name="Quail M.A."/>
            <person name="Platzer M."/>
            <person name="Rosenthal A."/>
            <person name="Noegel A.A."/>
        </authorList>
    </citation>
    <scope>NUCLEOTIDE SEQUENCE [LARGE SCALE GENOMIC DNA]</scope>
    <source>
        <strain>AX4</strain>
    </source>
</reference>
<reference key="2">
    <citation type="journal article" date="2005" name="Nature">
        <title>The genome of the social amoeba Dictyostelium discoideum.</title>
        <authorList>
            <person name="Eichinger L."/>
            <person name="Pachebat J.A."/>
            <person name="Gloeckner G."/>
            <person name="Rajandream M.A."/>
            <person name="Sucgang R."/>
            <person name="Berriman M."/>
            <person name="Song J."/>
            <person name="Olsen R."/>
            <person name="Szafranski K."/>
            <person name="Xu Q."/>
            <person name="Tunggal B."/>
            <person name="Kummerfeld S."/>
            <person name="Madera M."/>
            <person name="Konfortov B.A."/>
            <person name="Rivero F."/>
            <person name="Bankier A.T."/>
            <person name="Lehmann R."/>
            <person name="Hamlin N."/>
            <person name="Davies R."/>
            <person name="Gaudet P."/>
            <person name="Fey P."/>
            <person name="Pilcher K."/>
            <person name="Chen G."/>
            <person name="Saunders D."/>
            <person name="Sodergren E.J."/>
            <person name="Davis P."/>
            <person name="Kerhornou A."/>
            <person name="Nie X."/>
            <person name="Hall N."/>
            <person name="Anjard C."/>
            <person name="Hemphill L."/>
            <person name="Bason N."/>
            <person name="Farbrother P."/>
            <person name="Desany B."/>
            <person name="Just E."/>
            <person name="Morio T."/>
            <person name="Rost R."/>
            <person name="Churcher C.M."/>
            <person name="Cooper J."/>
            <person name="Haydock S."/>
            <person name="van Driessche N."/>
            <person name="Cronin A."/>
            <person name="Goodhead I."/>
            <person name="Muzny D.M."/>
            <person name="Mourier T."/>
            <person name="Pain A."/>
            <person name="Lu M."/>
            <person name="Harper D."/>
            <person name="Lindsay R."/>
            <person name="Hauser H."/>
            <person name="James K.D."/>
            <person name="Quiles M."/>
            <person name="Madan Babu M."/>
            <person name="Saito T."/>
            <person name="Buchrieser C."/>
            <person name="Wardroper A."/>
            <person name="Felder M."/>
            <person name="Thangavelu M."/>
            <person name="Johnson D."/>
            <person name="Knights A."/>
            <person name="Loulseged H."/>
            <person name="Mungall K.L."/>
            <person name="Oliver K."/>
            <person name="Price C."/>
            <person name="Quail M.A."/>
            <person name="Urushihara H."/>
            <person name="Hernandez J."/>
            <person name="Rabbinowitsch E."/>
            <person name="Steffen D."/>
            <person name="Sanders M."/>
            <person name="Ma J."/>
            <person name="Kohara Y."/>
            <person name="Sharp S."/>
            <person name="Simmonds M.N."/>
            <person name="Spiegler S."/>
            <person name="Tivey A."/>
            <person name="Sugano S."/>
            <person name="White B."/>
            <person name="Walker D."/>
            <person name="Woodward J.R."/>
            <person name="Winckler T."/>
            <person name="Tanaka Y."/>
            <person name="Shaulsky G."/>
            <person name="Schleicher M."/>
            <person name="Weinstock G.M."/>
            <person name="Rosenthal A."/>
            <person name="Cox E.C."/>
            <person name="Chisholm R.L."/>
            <person name="Gibbs R.A."/>
            <person name="Loomis W.F."/>
            <person name="Platzer M."/>
            <person name="Kay R.R."/>
            <person name="Williams J.G."/>
            <person name="Dear P.H."/>
            <person name="Noegel A.A."/>
            <person name="Barrell B.G."/>
            <person name="Kuspa A."/>
        </authorList>
    </citation>
    <scope>NUCLEOTIDE SEQUENCE [LARGE SCALE GENOMIC DNA]</scope>
    <source>
        <strain>AX4</strain>
    </source>
</reference>
<comment type="catalytic activity">
    <reaction>
        <text>L-seryl-[protein] + ATP = O-phospho-L-seryl-[protein] + ADP + H(+)</text>
        <dbReference type="Rhea" id="RHEA:17989"/>
        <dbReference type="Rhea" id="RHEA-COMP:9863"/>
        <dbReference type="Rhea" id="RHEA-COMP:11604"/>
        <dbReference type="ChEBI" id="CHEBI:15378"/>
        <dbReference type="ChEBI" id="CHEBI:29999"/>
        <dbReference type="ChEBI" id="CHEBI:30616"/>
        <dbReference type="ChEBI" id="CHEBI:83421"/>
        <dbReference type="ChEBI" id="CHEBI:456216"/>
        <dbReference type="EC" id="2.7.11.1"/>
    </reaction>
</comment>
<comment type="catalytic activity">
    <reaction>
        <text>L-threonyl-[protein] + ATP = O-phospho-L-threonyl-[protein] + ADP + H(+)</text>
        <dbReference type="Rhea" id="RHEA:46608"/>
        <dbReference type="Rhea" id="RHEA-COMP:11060"/>
        <dbReference type="Rhea" id="RHEA-COMP:11605"/>
        <dbReference type="ChEBI" id="CHEBI:15378"/>
        <dbReference type="ChEBI" id="CHEBI:30013"/>
        <dbReference type="ChEBI" id="CHEBI:30616"/>
        <dbReference type="ChEBI" id="CHEBI:61977"/>
        <dbReference type="ChEBI" id="CHEBI:456216"/>
        <dbReference type="EC" id="2.7.11.1"/>
    </reaction>
</comment>
<comment type="similarity">
    <text evidence="4">Belongs to the protein kinase superfamily. NEK Ser/Thr protein kinase family. NIMA subfamily.</text>
</comment>
<evidence type="ECO:0000255" key="1">
    <source>
        <dbReference type="PROSITE-ProRule" id="PRU00159"/>
    </source>
</evidence>
<evidence type="ECO:0000255" key="2">
    <source>
        <dbReference type="PROSITE-ProRule" id="PRU10027"/>
    </source>
</evidence>
<evidence type="ECO:0000256" key="3">
    <source>
        <dbReference type="SAM" id="MobiDB-lite"/>
    </source>
</evidence>
<evidence type="ECO:0000305" key="4"/>